<accession>O67716</accession>
<comment type="function">
    <text evidence="1">Catalyzes the NADPH-dependent formation of L-aspartate-semialdehyde (L-ASA) by the reductive dephosphorylation of L-aspartyl-4-phosphate.</text>
</comment>
<comment type="catalytic activity">
    <reaction evidence="1">
        <text>L-aspartate 4-semialdehyde + phosphate + NADP(+) = 4-phospho-L-aspartate + NADPH + H(+)</text>
        <dbReference type="Rhea" id="RHEA:24284"/>
        <dbReference type="ChEBI" id="CHEBI:15378"/>
        <dbReference type="ChEBI" id="CHEBI:43474"/>
        <dbReference type="ChEBI" id="CHEBI:57535"/>
        <dbReference type="ChEBI" id="CHEBI:57783"/>
        <dbReference type="ChEBI" id="CHEBI:58349"/>
        <dbReference type="ChEBI" id="CHEBI:537519"/>
        <dbReference type="EC" id="1.2.1.11"/>
    </reaction>
</comment>
<comment type="pathway">
    <text evidence="1">Amino-acid biosynthesis; L-lysine biosynthesis via DAP pathway; (S)-tetrahydrodipicolinate from L-aspartate: step 2/4.</text>
</comment>
<comment type="pathway">
    <text evidence="1">Amino-acid biosynthesis; L-methionine biosynthesis via de novo pathway; L-homoserine from L-aspartate: step 2/3.</text>
</comment>
<comment type="pathway">
    <text evidence="1">Amino-acid biosynthesis; L-threonine biosynthesis; L-threonine from L-aspartate: step 2/5.</text>
</comment>
<comment type="subunit">
    <text evidence="1">Homodimer.</text>
</comment>
<comment type="similarity">
    <text evidence="1">Belongs to the aspartate-semialdehyde dehydrogenase family.</text>
</comment>
<proteinExistence type="inferred from homology"/>
<sequence>MGYRVAIVGATGEVGRTFLKVLEERNFPVDELVLYASERSEGKVLTFKGKEYTVKALNKENSFKGIDIALFSAGGSTSKEWAPKFAKDGVVVIDNSSAWRMDPDVPLVVPEVNPEDVKDFKKKGIIANPNCSTIQMVVALKPIYDKAGIKRVVVSTYQAVSGAGAKAIEDLKNQTKAWCEGKEMPKAQKFPHQIAFNALPHIDVFFEDGYTKEENKMLYETRKIMHDENIKVSATCVRIPVFYGHSESISMETEKEISPEEAREVLKNAPGVIVIDNPQNNEYPMPIMAEGRDEVFVGRIRKDRVFEPGLSMWVVADNIRKGAATNAVQIAELLVKEGLI</sequence>
<dbReference type="EC" id="1.2.1.11" evidence="1"/>
<dbReference type="EMBL" id="AE000657">
    <property type="protein sequence ID" value="AAC07674.1"/>
    <property type="molecule type" value="Genomic_DNA"/>
</dbReference>
<dbReference type="PIR" id="B70461">
    <property type="entry name" value="B70461"/>
</dbReference>
<dbReference type="RefSeq" id="NP_214284.1">
    <property type="nucleotide sequence ID" value="NC_000918.1"/>
</dbReference>
<dbReference type="RefSeq" id="WP_010881220.1">
    <property type="nucleotide sequence ID" value="NC_000918.1"/>
</dbReference>
<dbReference type="SMR" id="O67716"/>
<dbReference type="FunCoup" id="O67716">
    <property type="interactions" value="414"/>
</dbReference>
<dbReference type="STRING" id="224324.aq_1866"/>
<dbReference type="EnsemblBacteria" id="AAC07674">
    <property type="protein sequence ID" value="AAC07674"/>
    <property type="gene ID" value="aq_1866"/>
</dbReference>
<dbReference type="KEGG" id="aae:aq_1866"/>
<dbReference type="PATRIC" id="fig|224324.8.peg.1448"/>
<dbReference type="eggNOG" id="COG0136">
    <property type="taxonomic scope" value="Bacteria"/>
</dbReference>
<dbReference type="HOGENOM" id="CLU_049966_0_1_0"/>
<dbReference type="InParanoid" id="O67716"/>
<dbReference type="OrthoDB" id="9805684at2"/>
<dbReference type="UniPathway" id="UPA00034">
    <property type="reaction ID" value="UER00016"/>
</dbReference>
<dbReference type="UniPathway" id="UPA00050">
    <property type="reaction ID" value="UER00463"/>
</dbReference>
<dbReference type="UniPathway" id="UPA00051">
    <property type="reaction ID" value="UER00464"/>
</dbReference>
<dbReference type="Proteomes" id="UP000000798">
    <property type="component" value="Chromosome"/>
</dbReference>
<dbReference type="GO" id="GO:0004073">
    <property type="term" value="F:aspartate-semialdehyde dehydrogenase activity"/>
    <property type="evidence" value="ECO:0007669"/>
    <property type="project" value="UniProtKB-UniRule"/>
</dbReference>
<dbReference type="GO" id="GO:0051287">
    <property type="term" value="F:NAD binding"/>
    <property type="evidence" value="ECO:0007669"/>
    <property type="project" value="InterPro"/>
</dbReference>
<dbReference type="GO" id="GO:0050661">
    <property type="term" value="F:NADP binding"/>
    <property type="evidence" value="ECO:0007669"/>
    <property type="project" value="UniProtKB-UniRule"/>
</dbReference>
<dbReference type="GO" id="GO:0046983">
    <property type="term" value="F:protein dimerization activity"/>
    <property type="evidence" value="ECO:0007669"/>
    <property type="project" value="InterPro"/>
</dbReference>
<dbReference type="GO" id="GO:0071266">
    <property type="term" value="P:'de novo' L-methionine biosynthetic process"/>
    <property type="evidence" value="ECO:0007669"/>
    <property type="project" value="UniProtKB-UniRule"/>
</dbReference>
<dbReference type="GO" id="GO:0019877">
    <property type="term" value="P:diaminopimelate biosynthetic process"/>
    <property type="evidence" value="ECO:0007669"/>
    <property type="project" value="UniProtKB-UniRule"/>
</dbReference>
<dbReference type="GO" id="GO:0009097">
    <property type="term" value="P:isoleucine biosynthetic process"/>
    <property type="evidence" value="ECO:0007669"/>
    <property type="project" value="InterPro"/>
</dbReference>
<dbReference type="GO" id="GO:0009089">
    <property type="term" value="P:lysine biosynthetic process via diaminopimelate"/>
    <property type="evidence" value="ECO:0007669"/>
    <property type="project" value="UniProtKB-UniRule"/>
</dbReference>
<dbReference type="GO" id="GO:0009088">
    <property type="term" value="P:threonine biosynthetic process"/>
    <property type="evidence" value="ECO:0007669"/>
    <property type="project" value="UniProtKB-UniRule"/>
</dbReference>
<dbReference type="CDD" id="cd18131">
    <property type="entry name" value="ASADH_C_bac_euk_like"/>
    <property type="match status" value="1"/>
</dbReference>
<dbReference type="CDD" id="cd02316">
    <property type="entry name" value="VcASADH2_like_N"/>
    <property type="match status" value="1"/>
</dbReference>
<dbReference type="Gene3D" id="3.30.360.10">
    <property type="entry name" value="Dihydrodipicolinate Reductase, domain 2"/>
    <property type="match status" value="1"/>
</dbReference>
<dbReference type="Gene3D" id="3.40.50.720">
    <property type="entry name" value="NAD(P)-binding Rossmann-like Domain"/>
    <property type="match status" value="1"/>
</dbReference>
<dbReference type="HAMAP" id="MF_02121">
    <property type="entry name" value="ASADH"/>
    <property type="match status" value="1"/>
</dbReference>
<dbReference type="InterPro" id="IPR000319">
    <property type="entry name" value="Asp-semialdehyde_DH_CS"/>
</dbReference>
<dbReference type="InterPro" id="IPR012080">
    <property type="entry name" value="Asp_semialdehyde_DH"/>
</dbReference>
<dbReference type="InterPro" id="IPR005986">
    <property type="entry name" value="Asp_semialdehyde_DH_beta"/>
</dbReference>
<dbReference type="InterPro" id="IPR036291">
    <property type="entry name" value="NAD(P)-bd_dom_sf"/>
</dbReference>
<dbReference type="InterPro" id="IPR000534">
    <property type="entry name" value="Semialdehyde_DH_NAD-bd"/>
</dbReference>
<dbReference type="InterPro" id="IPR012280">
    <property type="entry name" value="Semialdhyde_DH_dimer_dom"/>
</dbReference>
<dbReference type="NCBIfam" id="TIGR01296">
    <property type="entry name" value="asd_B"/>
    <property type="match status" value="1"/>
</dbReference>
<dbReference type="NCBIfam" id="NF005957">
    <property type="entry name" value="PRK08040.1"/>
    <property type="match status" value="1"/>
</dbReference>
<dbReference type="NCBIfam" id="NF011456">
    <property type="entry name" value="PRK14874.1"/>
    <property type="match status" value="1"/>
</dbReference>
<dbReference type="PANTHER" id="PTHR46278:SF2">
    <property type="entry name" value="ASPARTATE-SEMIALDEHYDE DEHYDROGENASE"/>
    <property type="match status" value="1"/>
</dbReference>
<dbReference type="PANTHER" id="PTHR46278">
    <property type="entry name" value="DEHYDROGENASE, PUTATIVE-RELATED"/>
    <property type="match status" value="1"/>
</dbReference>
<dbReference type="Pfam" id="PF01118">
    <property type="entry name" value="Semialdhyde_dh"/>
    <property type="match status" value="1"/>
</dbReference>
<dbReference type="Pfam" id="PF02774">
    <property type="entry name" value="Semialdhyde_dhC"/>
    <property type="match status" value="1"/>
</dbReference>
<dbReference type="PIRSF" id="PIRSF000148">
    <property type="entry name" value="ASA_dh"/>
    <property type="match status" value="1"/>
</dbReference>
<dbReference type="SMART" id="SM00859">
    <property type="entry name" value="Semialdhyde_dh"/>
    <property type="match status" value="1"/>
</dbReference>
<dbReference type="SUPFAM" id="SSF55347">
    <property type="entry name" value="Glyceraldehyde-3-phosphate dehydrogenase-like, C-terminal domain"/>
    <property type="match status" value="1"/>
</dbReference>
<dbReference type="SUPFAM" id="SSF51735">
    <property type="entry name" value="NAD(P)-binding Rossmann-fold domains"/>
    <property type="match status" value="1"/>
</dbReference>
<dbReference type="PROSITE" id="PS01103">
    <property type="entry name" value="ASD"/>
    <property type="match status" value="1"/>
</dbReference>
<evidence type="ECO:0000255" key="1">
    <source>
        <dbReference type="HAMAP-Rule" id="MF_02121"/>
    </source>
</evidence>
<organism>
    <name type="scientific">Aquifex aeolicus (strain VF5)</name>
    <dbReference type="NCBI Taxonomy" id="224324"/>
    <lineage>
        <taxon>Bacteria</taxon>
        <taxon>Pseudomonadati</taxon>
        <taxon>Aquificota</taxon>
        <taxon>Aquificia</taxon>
        <taxon>Aquificales</taxon>
        <taxon>Aquificaceae</taxon>
        <taxon>Aquifex</taxon>
    </lineage>
</organism>
<protein>
    <recommendedName>
        <fullName evidence="1">Aspartate-semialdehyde dehydrogenase</fullName>
        <shortName evidence="1">ASA dehydrogenase</shortName>
        <shortName evidence="1">ASADH</shortName>
        <ecNumber evidence="1">1.2.1.11</ecNumber>
    </recommendedName>
    <alternativeName>
        <fullName evidence="1">Aspartate-beta-semialdehyde dehydrogenase</fullName>
    </alternativeName>
</protein>
<keyword id="KW-0028">Amino-acid biosynthesis</keyword>
<keyword id="KW-0220">Diaminopimelate biosynthesis</keyword>
<keyword id="KW-0457">Lysine biosynthesis</keyword>
<keyword id="KW-0486">Methionine biosynthesis</keyword>
<keyword id="KW-0521">NADP</keyword>
<keyword id="KW-0560">Oxidoreductase</keyword>
<keyword id="KW-1185">Reference proteome</keyword>
<keyword id="KW-0791">Threonine biosynthesis</keyword>
<reference key="1">
    <citation type="journal article" date="1998" name="Nature">
        <title>The complete genome of the hyperthermophilic bacterium Aquifex aeolicus.</title>
        <authorList>
            <person name="Deckert G."/>
            <person name="Warren P.V."/>
            <person name="Gaasterland T."/>
            <person name="Young W.G."/>
            <person name="Lenox A.L."/>
            <person name="Graham D.E."/>
            <person name="Overbeek R."/>
            <person name="Snead M.A."/>
            <person name="Keller M."/>
            <person name="Aujay M."/>
            <person name="Huber R."/>
            <person name="Feldman R.A."/>
            <person name="Short J.M."/>
            <person name="Olsen G.J."/>
            <person name="Swanson R.V."/>
        </authorList>
    </citation>
    <scope>NUCLEOTIDE SEQUENCE [LARGE SCALE GENOMIC DNA]</scope>
    <source>
        <strain>VF5</strain>
    </source>
</reference>
<name>DHAS_AQUAE</name>
<feature type="chain" id="PRO_0000141359" description="Aspartate-semialdehyde dehydrogenase">
    <location>
        <begin position="1"/>
        <end position="340"/>
    </location>
</feature>
<feature type="active site" description="Acyl-thioester intermediate" evidence="1">
    <location>
        <position position="131"/>
    </location>
</feature>
<feature type="active site" description="Proton acceptor" evidence="1">
    <location>
        <position position="245"/>
    </location>
</feature>
<feature type="binding site" evidence="1">
    <location>
        <begin position="11"/>
        <end position="14"/>
    </location>
    <ligand>
        <name>NADP(+)</name>
        <dbReference type="ChEBI" id="CHEBI:58349"/>
    </ligand>
</feature>
<feature type="binding site" evidence="1">
    <location>
        <begin position="39"/>
        <end position="40"/>
    </location>
    <ligand>
        <name>NADP(+)</name>
        <dbReference type="ChEBI" id="CHEBI:58349"/>
    </ligand>
</feature>
<feature type="binding site" evidence="1">
    <location>
        <position position="100"/>
    </location>
    <ligand>
        <name>phosphate</name>
        <dbReference type="ChEBI" id="CHEBI:43474"/>
    </ligand>
</feature>
<feature type="binding site" evidence="1">
    <location>
        <position position="158"/>
    </location>
    <ligand>
        <name>substrate</name>
    </ligand>
</feature>
<feature type="binding site" evidence="1">
    <location>
        <begin position="161"/>
        <end position="162"/>
    </location>
    <ligand>
        <name>NADP(+)</name>
        <dbReference type="ChEBI" id="CHEBI:58349"/>
    </ligand>
</feature>
<feature type="binding site" evidence="1">
    <location>
        <position position="216"/>
    </location>
    <ligand>
        <name>phosphate</name>
        <dbReference type="ChEBI" id="CHEBI:43474"/>
    </ligand>
</feature>
<feature type="binding site" evidence="1">
    <location>
        <position position="238"/>
    </location>
    <ligand>
        <name>substrate</name>
    </ligand>
</feature>
<feature type="binding site" evidence="1">
    <location>
        <position position="318"/>
    </location>
    <ligand>
        <name>NADP(+)</name>
        <dbReference type="ChEBI" id="CHEBI:58349"/>
    </ligand>
</feature>
<gene>
    <name evidence="1" type="primary">asd</name>
    <name type="ordered locus">aq_1866</name>
</gene>